<accession>B2RLA8</accession>
<evidence type="ECO:0000255" key="1">
    <source>
        <dbReference type="HAMAP-Rule" id="MF_00372"/>
    </source>
</evidence>
<name>HUTI_PORG3</name>
<organism>
    <name type="scientific">Porphyromonas gingivalis (strain ATCC 33277 / DSM 20709 / CIP 103683 / JCM 12257 / NCTC 11834 / 2561)</name>
    <dbReference type="NCBI Taxonomy" id="431947"/>
    <lineage>
        <taxon>Bacteria</taxon>
        <taxon>Pseudomonadati</taxon>
        <taxon>Bacteroidota</taxon>
        <taxon>Bacteroidia</taxon>
        <taxon>Bacteroidales</taxon>
        <taxon>Porphyromonadaceae</taxon>
        <taxon>Porphyromonas</taxon>
    </lineage>
</organism>
<protein>
    <recommendedName>
        <fullName evidence="1">Imidazolonepropionase</fullName>
        <ecNumber evidence="1">3.5.2.7</ecNumber>
    </recommendedName>
    <alternativeName>
        <fullName evidence="1">Imidazolone-5-propionate hydrolase</fullName>
    </alternativeName>
</protein>
<sequence>MPNTPHTMNLYIKNIAQLVTCQGTEAKHGREAMGQIHTIEGPAAVVIRDGIITFAGRMADVAPSMTEGCRELDATGRCVLPGFVDSHTHLVFGGYREDEFQWRLAGDSYMSIMERGGGIASTMRATRAESEDELKASAHRHLSNMMKMGVTTVEAKSGYGMNLETELKQLRVVRDLQDEQPLDLYSTFMGAHDTAPEYKGRPTEFIEYLCREVLPEVVRQNLAECCDIFTEKGVFDHEQTRRMLTAAKEAGLSVKMHADEIVPFGGAELAAELGCLSADHLLRISDAGIKALAESNTVATLLPCTAFSLRADYAPARKMIDAGCAVALGSDLNPGSCFSASVPLMFALATLYMGMTVEEAITALTINGAAAIGRADTIGSIEPGKKGDLVVLQYPSYKFLSYHFGMNLVEHTVKGGRVVYTNS</sequence>
<feature type="chain" id="PRO_1000121547" description="Imidazolonepropionase">
    <location>
        <begin position="1"/>
        <end position="423"/>
    </location>
</feature>
<feature type="binding site" evidence="1">
    <location>
        <position position="87"/>
    </location>
    <ligand>
        <name>Fe(3+)</name>
        <dbReference type="ChEBI" id="CHEBI:29034"/>
    </ligand>
</feature>
<feature type="binding site" evidence="1">
    <location>
        <position position="87"/>
    </location>
    <ligand>
        <name>Zn(2+)</name>
        <dbReference type="ChEBI" id="CHEBI:29105"/>
    </ligand>
</feature>
<feature type="binding site" evidence="1">
    <location>
        <position position="89"/>
    </location>
    <ligand>
        <name>Fe(3+)</name>
        <dbReference type="ChEBI" id="CHEBI:29034"/>
    </ligand>
</feature>
<feature type="binding site" evidence="1">
    <location>
        <position position="89"/>
    </location>
    <ligand>
        <name>Zn(2+)</name>
        <dbReference type="ChEBI" id="CHEBI:29105"/>
    </ligand>
</feature>
<feature type="binding site" evidence="1">
    <location>
        <position position="96"/>
    </location>
    <ligand>
        <name>4-imidazolone-5-propanoate</name>
        <dbReference type="ChEBI" id="CHEBI:77893"/>
    </ligand>
</feature>
<feature type="binding site" evidence="1">
    <location>
        <position position="159"/>
    </location>
    <ligand>
        <name>4-imidazolone-5-propanoate</name>
        <dbReference type="ChEBI" id="CHEBI:77893"/>
    </ligand>
</feature>
<feature type="binding site" evidence="1">
    <location>
        <position position="159"/>
    </location>
    <ligand>
        <name>N-formimidoyl-L-glutamate</name>
        <dbReference type="ChEBI" id="CHEBI:58928"/>
    </ligand>
</feature>
<feature type="binding site" evidence="1">
    <location>
        <position position="192"/>
    </location>
    <ligand>
        <name>4-imidazolone-5-propanoate</name>
        <dbReference type="ChEBI" id="CHEBI:77893"/>
    </ligand>
</feature>
<feature type="binding site" evidence="1">
    <location>
        <position position="257"/>
    </location>
    <ligand>
        <name>Fe(3+)</name>
        <dbReference type="ChEBI" id="CHEBI:29034"/>
    </ligand>
</feature>
<feature type="binding site" evidence="1">
    <location>
        <position position="257"/>
    </location>
    <ligand>
        <name>Zn(2+)</name>
        <dbReference type="ChEBI" id="CHEBI:29105"/>
    </ligand>
</feature>
<feature type="binding site" evidence="1">
    <location>
        <position position="260"/>
    </location>
    <ligand>
        <name>4-imidazolone-5-propanoate</name>
        <dbReference type="ChEBI" id="CHEBI:77893"/>
    </ligand>
</feature>
<feature type="binding site" evidence="1">
    <location>
        <position position="331"/>
    </location>
    <ligand>
        <name>Fe(3+)</name>
        <dbReference type="ChEBI" id="CHEBI:29034"/>
    </ligand>
</feature>
<feature type="binding site" evidence="1">
    <location>
        <position position="331"/>
    </location>
    <ligand>
        <name>Zn(2+)</name>
        <dbReference type="ChEBI" id="CHEBI:29105"/>
    </ligand>
</feature>
<feature type="binding site" evidence="1">
    <location>
        <position position="333"/>
    </location>
    <ligand>
        <name>N-formimidoyl-L-glutamate</name>
        <dbReference type="ChEBI" id="CHEBI:58928"/>
    </ligand>
</feature>
<feature type="binding site" evidence="1">
    <location>
        <position position="335"/>
    </location>
    <ligand>
        <name>N-formimidoyl-L-glutamate</name>
        <dbReference type="ChEBI" id="CHEBI:58928"/>
    </ligand>
</feature>
<feature type="binding site" evidence="1">
    <location>
        <position position="336"/>
    </location>
    <ligand>
        <name>4-imidazolone-5-propanoate</name>
        <dbReference type="ChEBI" id="CHEBI:77893"/>
    </ligand>
</feature>
<keyword id="KW-0963">Cytoplasm</keyword>
<keyword id="KW-0369">Histidine metabolism</keyword>
<keyword id="KW-0378">Hydrolase</keyword>
<keyword id="KW-0408">Iron</keyword>
<keyword id="KW-0479">Metal-binding</keyword>
<keyword id="KW-0862">Zinc</keyword>
<comment type="function">
    <text evidence="1">Catalyzes the hydrolytic cleavage of the carbon-nitrogen bond in imidazolone-5-propanoate to yield N-formimidoyl-L-glutamate. It is the third step in the universal histidine degradation pathway.</text>
</comment>
<comment type="catalytic activity">
    <reaction evidence="1">
        <text>4-imidazolone-5-propanoate + H2O = N-formimidoyl-L-glutamate</text>
        <dbReference type="Rhea" id="RHEA:23660"/>
        <dbReference type="ChEBI" id="CHEBI:15377"/>
        <dbReference type="ChEBI" id="CHEBI:58928"/>
        <dbReference type="ChEBI" id="CHEBI:77893"/>
        <dbReference type="EC" id="3.5.2.7"/>
    </reaction>
</comment>
<comment type="cofactor">
    <cofactor evidence="1">
        <name>Zn(2+)</name>
        <dbReference type="ChEBI" id="CHEBI:29105"/>
    </cofactor>
    <cofactor evidence="1">
        <name>Fe(3+)</name>
        <dbReference type="ChEBI" id="CHEBI:29034"/>
    </cofactor>
    <text evidence="1">Binds 1 zinc or iron ion per subunit.</text>
</comment>
<comment type="pathway">
    <text evidence="1">Amino-acid degradation; L-histidine degradation into L-glutamate; N-formimidoyl-L-glutamate from L-histidine: step 3/3.</text>
</comment>
<comment type="subcellular location">
    <subcellularLocation>
        <location evidence="1">Cytoplasm</location>
    </subcellularLocation>
</comment>
<comment type="similarity">
    <text evidence="1">Belongs to the metallo-dependent hydrolases superfamily. HutI family.</text>
</comment>
<dbReference type="EC" id="3.5.2.7" evidence="1"/>
<dbReference type="EMBL" id="AP009380">
    <property type="protein sequence ID" value="BAG34153.1"/>
    <property type="molecule type" value="Genomic_DNA"/>
</dbReference>
<dbReference type="RefSeq" id="WP_012458424.1">
    <property type="nucleotide sequence ID" value="NC_010729.1"/>
</dbReference>
<dbReference type="SMR" id="B2RLA8"/>
<dbReference type="GeneID" id="29256802"/>
<dbReference type="KEGG" id="pgn:PGN_1634"/>
<dbReference type="eggNOG" id="COG1228">
    <property type="taxonomic scope" value="Bacteria"/>
</dbReference>
<dbReference type="HOGENOM" id="CLU_041647_0_1_10"/>
<dbReference type="OrthoDB" id="9776455at2"/>
<dbReference type="BioCyc" id="PGIN431947:G1G2V-1836-MONOMER"/>
<dbReference type="UniPathway" id="UPA00379">
    <property type="reaction ID" value="UER00551"/>
</dbReference>
<dbReference type="Proteomes" id="UP000008842">
    <property type="component" value="Chromosome"/>
</dbReference>
<dbReference type="GO" id="GO:0005737">
    <property type="term" value="C:cytoplasm"/>
    <property type="evidence" value="ECO:0007669"/>
    <property type="project" value="UniProtKB-SubCell"/>
</dbReference>
<dbReference type="GO" id="GO:0050480">
    <property type="term" value="F:imidazolonepropionase activity"/>
    <property type="evidence" value="ECO:0007669"/>
    <property type="project" value="UniProtKB-UniRule"/>
</dbReference>
<dbReference type="GO" id="GO:0005506">
    <property type="term" value="F:iron ion binding"/>
    <property type="evidence" value="ECO:0007669"/>
    <property type="project" value="UniProtKB-UniRule"/>
</dbReference>
<dbReference type="GO" id="GO:0008270">
    <property type="term" value="F:zinc ion binding"/>
    <property type="evidence" value="ECO:0007669"/>
    <property type="project" value="UniProtKB-UniRule"/>
</dbReference>
<dbReference type="GO" id="GO:0019556">
    <property type="term" value="P:L-histidine catabolic process to glutamate and formamide"/>
    <property type="evidence" value="ECO:0007669"/>
    <property type="project" value="UniProtKB-UniPathway"/>
</dbReference>
<dbReference type="GO" id="GO:0019557">
    <property type="term" value="P:L-histidine catabolic process to glutamate and formate"/>
    <property type="evidence" value="ECO:0007669"/>
    <property type="project" value="UniProtKB-UniPathway"/>
</dbReference>
<dbReference type="CDD" id="cd01296">
    <property type="entry name" value="Imidazolone-5PH"/>
    <property type="match status" value="1"/>
</dbReference>
<dbReference type="FunFam" id="3.20.20.140:FF:000007">
    <property type="entry name" value="Imidazolonepropionase"/>
    <property type="match status" value="1"/>
</dbReference>
<dbReference type="Gene3D" id="3.20.20.140">
    <property type="entry name" value="Metal-dependent hydrolases"/>
    <property type="match status" value="1"/>
</dbReference>
<dbReference type="Gene3D" id="2.30.40.10">
    <property type="entry name" value="Urease, subunit C, domain 1"/>
    <property type="match status" value="1"/>
</dbReference>
<dbReference type="HAMAP" id="MF_00372">
    <property type="entry name" value="HutI"/>
    <property type="match status" value="1"/>
</dbReference>
<dbReference type="InterPro" id="IPR006680">
    <property type="entry name" value="Amidohydro-rel"/>
</dbReference>
<dbReference type="InterPro" id="IPR005920">
    <property type="entry name" value="HutI"/>
</dbReference>
<dbReference type="InterPro" id="IPR011059">
    <property type="entry name" value="Metal-dep_hydrolase_composite"/>
</dbReference>
<dbReference type="InterPro" id="IPR032466">
    <property type="entry name" value="Metal_Hydrolase"/>
</dbReference>
<dbReference type="NCBIfam" id="TIGR01224">
    <property type="entry name" value="hutI"/>
    <property type="match status" value="1"/>
</dbReference>
<dbReference type="PANTHER" id="PTHR42752">
    <property type="entry name" value="IMIDAZOLONEPROPIONASE"/>
    <property type="match status" value="1"/>
</dbReference>
<dbReference type="PANTHER" id="PTHR42752:SF1">
    <property type="entry name" value="IMIDAZOLONEPROPIONASE-RELATED"/>
    <property type="match status" value="1"/>
</dbReference>
<dbReference type="Pfam" id="PF01979">
    <property type="entry name" value="Amidohydro_1"/>
    <property type="match status" value="1"/>
</dbReference>
<dbReference type="SUPFAM" id="SSF51338">
    <property type="entry name" value="Composite domain of metallo-dependent hydrolases"/>
    <property type="match status" value="1"/>
</dbReference>
<dbReference type="SUPFAM" id="SSF51556">
    <property type="entry name" value="Metallo-dependent hydrolases"/>
    <property type="match status" value="1"/>
</dbReference>
<proteinExistence type="inferred from homology"/>
<gene>
    <name evidence="1" type="primary">hutI</name>
    <name type="ordered locus">PGN_1634</name>
</gene>
<reference key="1">
    <citation type="journal article" date="2008" name="DNA Res.">
        <title>Determination of the genome sequence of Porphyromonas gingivalis strain ATCC 33277 and genomic comparison with strain W83 revealed extensive genome rearrangements in P. gingivalis.</title>
        <authorList>
            <person name="Naito M."/>
            <person name="Hirakawa H."/>
            <person name="Yamashita A."/>
            <person name="Ohara N."/>
            <person name="Shoji M."/>
            <person name="Yukitake H."/>
            <person name="Nakayama K."/>
            <person name="Toh H."/>
            <person name="Yoshimura F."/>
            <person name="Kuhara S."/>
            <person name="Hattori M."/>
            <person name="Hayashi T."/>
            <person name="Nakayama K."/>
        </authorList>
    </citation>
    <scope>NUCLEOTIDE SEQUENCE [LARGE SCALE GENOMIC DNA]</scope>
    <source>
        <strain>ATCC 33277 / DSM 20709 / CIP 103683 / JCM 12257 / NCTC 11834 / 2561</strain>
    </source>
</reference>